<name>RS17_HISS2</name>
<accession>B0UX22</accession>
<gene>
    <name evidence="1" type="primary">rpsQ</name>
    <name type="ordered locus">HSM_1961</name>
</gene>
<feature type="chain" id="PRO_1000086842" description="Small ribosomal subunit protein uS17">
    <location>
        <begin position="1"/>
        <end position="84"/>
    </location>
</feature>
<keyword id="KW-0687">Ribonucleoprotein</keyword>
<keyword id="KW-0689">Ribosomal protein</keyword>
<keyword id="KW-0694">RNA-binding</keyword>
<keyword id="KW-0699">rRNA-binding</keyword>
<sequence length="84" mass="9592">MTDKIRTVQGKVISDKMDKSFVVAIERTVKHPIYGKFIRRTTKLHVHDEHNEAKLGDVVEVRGCRPLSKTKSHTLVRVVEKAQA</sequence>
<protein>
    <recommendedName>
        <fullName evidence="1">Small ribosomal subunit protein uS17</fullName>
    </recommendedName>
    <alternativeName>
        <fullName evidence="2">30S ribosomal protein S17</fullName>
    </alternativeName>
</protein>
<evidence type="ECO:0000255" key="1">
    <source>
        <dbReference type="HAMAP-Rule" id="MF_01345"/>
    </source>
</evidence>
<evidence type="ECO:0000305" key="2"/>
<proteinExistence type="inferred from homology"/>
<comment type="function">
    <text evidence="1">One of the primary rRNA binding proteins, it binds specifically to the 5'-end of 16S ribosomal RNA.</text>
</comment>
<comment type="subunit">
    <text evidence="1">Part of the 30S ribosomal subunit.</text>
</comment>
<comment type="similarity">
    <text evidence="1">Belongs to the universal ribosomal protein uS17 family.</text>
</comment>
<reference key="1">
    <citation type="submission" date="2008-02" db="EMBL/GenBank/DDBJ databases">
        <title>Complete sequence of Haemophilus somnus 2336.</title>
        <authorList>
            <consortium name="US DOE Joint Genome Institute"/>
            <person name="Siddaramappa S."/>
            <person name="Duncan A.J."/>
            <person name="Challacombe J.F."/>
            <person name="Rainey D."/>
            <person name="Gillaspy A.F."/>
            <person name="Carson M."/>
            <person name="Gipson J."/>
            <person name="Gipson M."/>
            <person name="Bruce D."/>
            <person name="Detter J.C."/>
            <person name="Han C.S."/>
            <person name="Land M."/>
            <person name="Tapia R."/>
            <person name="Thompson L.S."/>
            <person name="Orvis J."/>
            <person name="Zaitshik J."/>
            <person name="Barnes G."/>
            <person name="Brettin T.S."/>
            <person name="Dyer D.W."/>
            <person name="Inzana T.J."/>
        </authorList>
    </citation>
    <scope>NUCLEOTIDE SEQUENCE [LARGE SCALE GENOMIC DNA]</scope>
    <source>
        <strain>2336</strain>
    </source>
</reference>
<dbReference type="EMBL" id="CP000947">
    <property type="protein sequence ID" value="ACA31756.1"/>
    <property type="molecule type" value="Genomic_DNA"/>
</dbReference>
<dbReference type="RefSeq" id="WP_011608224.1">
    <property type="nucleotide sequence ID" value="NC_010519.1"/>
</dbReference>
<dbReference type="SMR" id="B0UX22"/>
<dbReference type="STRING" id="228400.HSM_1961"/>
<dbReference type="GeneID" id="31488272"/>
<dbReference type="KEGG" id="hsm:HSM_1961"/>
<dbReference type="HOGENOM" id="CLU_073626_1_1_6"/>
<dbReference type="GO" id="GO:0022627">
    <property type="term" value="C:cytosolic small ribosomal subunit"/>
    <property type="evidence" value="ECO:0007669"/>
    <property type="project" value="TreeGrafter"/>
</dbReference>
<dbReference type="GO" id="GO:0019843">
    <property type="term" value="F:rRNA binding"/>
    <property type="evidence" value="ECO:0007669"/>
    <property type="project" value="UniProtKB-UniRule"/>
</dbReference>
<dbReference type="GO" id="GO:0003735">
    <property type="term" value="F:structural constituent of ribosome"/>
    <property type="evidence" value="ECO:0007669"/>
    <property type="project" value="InterPro"/>
</dbReference>
<dbReference type="GO" id="GO:0006412">
    <property type="term" value="P:translation"/>
    <property type="evidence" value="ECO:0007669"/>
    <property type="project" value="UniProtKB-UniRule"/>
</dbReference>
<dbReference type="CDD" id="cd00364">
    <property type="entry name" value="Ribosomal_uS17"/>
    <property type="match status" value="1"/>
</dbReference>
<dbReference type="FunFam" id="2.40.50.140:FF:000014">
    <property type="entry name" value="30S ribosomal protein S17"/>
    <property type="match status" value="1"/>
</dbReference>
<dbReference type="Gene3D" id="2.40.50.140">
    <property type="entry name" value="Nucleic acid-binding proteins"/>
    <property type="match status" value="1"/>
</dbReference>
<dbReference type="HAMAP" id="MF_01345_B">
    <property type="entry name" value="Ribosomal_uS17_B"/>
    <property type="match status" value="1"/>
</dbReference>
<dbReference type="InterPro" id="IPR012340">
    <property type="entry name" value="NA-bd_OB-fold"/>
</dbReference>
<dbReference type="InterPro" id="IPR000266">
    <property type="entry name" value="Ribosomal_uS17"/>
</dbReference>
<dbReference type="InterPro" id="IPR019984">
    <property type="entry name" value="Ribosomal_uS17_bact/chlr"/>
</dbReference>
<dbReference type="NCBIfam" id="NF004123">
    <property type="entry name" value="PRK05610.1"/>
    <property type="match status" value="1"/>
</dbReference>
<dbReference type="NCBIfam" id="TIGR03635">
    <property type="entry name" value="uS17_bact"/>
    <property type="match status" value="1"/>
</dbReference>
<dbReference type="PANTHER" id="PTHR10744">
    <property type="entry name" value="40S RIBOSOMAL PROTEIN S11 FAMILY MEMBER"/>
    <property type="match status" value="1"/>
</dbReference>
<dbReference type="PANTHER" id="PTHR10744:SF1">
    <property type="entry name" value="SMALL RIBOSOMAL SUBUNIT PROTEIN US17M"/>
    <property type="match status" value="1"/>
</dbReference>
<dbReference type="Pfam" id="PF00366">
    <property type="entry name" value="Ribosomal_S17"/>
    <property type="match status" value="1"/>
</dbReference>
<dbReference type="PRINTS" id="PR00973">
    <property type="entry name" value="RIBOSOMALS17"/>
</dbReference>
<dbReference type="SUPFAM" id="SSF50249">
    <property type="entry name" value="Nucleic acid-binding proteins"/>
    <property type="match status" value="1"/>
</dbReference>
<organism>
    <name type="scientific">Histophilus somni (strain 2336)</name>
    <name type="common">Haemophilus somnus</name>
    <dbReference type="NCBI Taxonomy" id="228400"/>
    <lineage>
        <taxon>Bacteria</taxon>
        <taxon>Pseudomonadati</taxon>
        <taxon>Pseudomonadota</taxon>
        <taxon>Gammaproteobacteria</taxon>
        <taxon>Pasteurellales</taxon>
        <taxon>Pasteurellaceae</taxon>
        <taxon>Histophilus</taxon>
    </lineage>
</organism>